<name>IF3_STAAM</name>
<organism>
    <name type="scientific">Staphylococcus aureus (strain Mu50 / ATCC 700699)</name>
    <dbReference type="NCBI Taxonomy" id="158878"/>
    <lineage>
        <taxon>Bacteria</taxon>
        <taxon>Bacillati</taxon>
        <taxon>Bacillota</taxon>
        <taxon>Bacilli</taxon>
        <taxon>Bacillales</taxon>
        <taxon>Staphylococcaceae</taxon>
        <taxon>Staphylococcus</taxon>
    </lineage>
</organism>
<keyword id="KW-0963">Cytoplasm</keyword>
<keyword id="KW-0396">Initiation factor</keyword>
<keyword id="KW-0648">Protein biosynthesis</keyword>
<protein>
    <recommendedName>
        <fullName evidence="1">Translation initiation factor IF-3</fullName>
    </recommendedName>
</protein>
<reference key="1">
    <citation type="journal article" date="2001" name="Lancet">
        <title>Whole genome sequencing of meticillin-resistant Staphylococcus aureus.</title>
        <authorList>
            <person name="Kuroda M."/>
            <person name="Ohta T."/>
            <person name="Uchiyama I."/>
            <person name="Baba T."/>
            <person name="Yuzawa H."/>
            <person name="Kobayashi I."/>
            <person name="Cui L."/>
            <person name="Oguchi A."/>
            <person name="Aoki K."/>
            <person name="Nagai Y."/>
            <person name="Lian J.-Q."/>
            <person name="Ito T."/>
            <person name="Kanamori M."/>
            <person name="Matsumaru H."/>
            <person name="Maruyama A."/>
            <person name="Murakami H."/>
            <person name="Hosoyama A."/>
            <person name="Mizutani-Ui Y."/>
            <person name="Takahashi N.K."/>
            <person name="Sawano T."/>
            <person name="Inoue R."/>
            <person name="Kaito C."/>
            <person name="Sekimizu K."/>
            <person name="Hirakawa H."/>
            <person name="Kuhara S."/>
            <person name="Goto S."/>
            <person name="Yabuzaki J."/>
            <person name="Kanehisa M."/>
            <person name="Yamashita A."/>
            <person name="Oshima K."/>
            <person name="Furuya K."/>
            <person name="Yoshino C."/>
            <person name="Shiba T."/>
            <person name="Hattori M."/>
            <person name="Ogasawara N."/>
            <person name="Hayashi H."/>
            <person name="Hiramatsu K."/>
        </authorList>
    </citation>
    <scope>NUCLEOTIDE SEQUENCE [LARGE SCALE GENOMIC DNA]</scope>
    <source>
        <strain>Mu50 / ATCC 700699</strain>
    </source>
</reference>
<proteinExistence type="inferred from homology"/>
<feature type="chain" id="PRO_0000177576" description="Translation initiation factor IF-3">
    <location>
        <begin position="1"/>
        <end position="175"/>
    </location>
</feature>
<sequence>MSTIAKDQTQINDKIRAKELRLIGQDGEQIGVKSKREALEMAERVDLDLVVVAPNAKPPVARIMDYGKFKFEQQKKEKEMKKKQKIINVKEIRLSPTIEEHDFQTKLKNGRKFLTKGDKCKVSIRFRGRAITHKEIGQRVLEKYADECKDIATVEQKPKMDGRQMFIMLAPTAEK</sequence>
<dbReference type="EMBL" id="BA000017">
    <property type="protein sequence ID" value="BAB57842.1"/>
    <property type="status" value="ALT_INIT"/>
    <property type="molecule type" value="Genomic_DNA"/>
</dbReference>
<dbReference type="RefSeq" id="WP_001791162.1">
    <property type="nucleotide sequence ID" value="NC_002758.2"/>
</dbReference>
<dbReference type="SMR" id="P65139"/>
<dbReference type="GeneID" id="66839860"/>
<dbReference type="KEGG" id="sav:SAV1680"/>
<dbReference type="HOGENOM" id="CLU_054919_3_2_9"/>
<dbReference type="Proteomes" id="UP000002481">
    <property type="component" value="Chromosome"/>
</dbReference>
<dbReference type="GO" id="GO:0005829">
    <property type="term" value="C:cytosol"/>
    <property type="evidence" value="ECO:0007669"/>
    <property type="project" value="TreeGrafter"/>
</dbReference>
<dbReference type="GO" id="GO:0016020">
    <property type="term" value="C:membrane"/>
    <property type="evidence" value="ECO:0007669"/>
    <property type="project" value="TreeGrafter"/>
</dbReference>
<dbReference type="GO" id="GO:0043022">
    <property type="term" value="F:ribosome binding"/>
    <property type="evidence" value="ECO:0007669"/>
    <property type="project" value="TreeGrafter"/>
</dbReference>
<dbReference type="GO" id="GO:0003743">
    <property type="term" value="F:translation initiation factor activity"/>
    <property type="evidence" value="ECO:0007669"/>
    <property type="project" value="UniProtKB-UniRule"/>
</dbReference>
<dbReference type="GO" id="GO:0032790">
    <property type="term" value="P:ribosome disassembly"/>
    <property type="evidence" value="ECO:0007669"/>
    <property type="project" value="TreeGrafter"/>
</dbReference>
<dbReference type="FunFam" id="3.10.20.80:FF:000001">
    <property type="entry name" value="Translation initiation factor IF-3"/>
    <property type="match status" value="1"/>
</dbReference>
<dbReference type="FunFam" id="3.30.110.10:FF:000001">
    <property type="entry name" value="Translation initiation factor IF-3"/>
    <property type="match status" value="1"/>
</dbReference>
<dbReference type="Gene3D" id="3.30.110.10">
    <property type="entry name" value="Translation initiation factor 3 (IF-3), C-terminal domain"/>
    <property type="match status" value="1"/>
</dbReference>
<dbReference type="Gene3D" id="3.10.20.80">
    <property type="entry name" value="Translation initiation factor 3 (IF-3), N-terminal domain"/>
    <property type="match status" value="1"/>
</dbReference>
<dbReference type="HAMAP" id="MF_00080">
    <property type="entry name" value="IF_3"/>
    <property type="match status" value="1"/>
</dbReference>
<dbReference type="InterPro" id="IPR036788">
    <property type="entry name" value="T_IF-3_C_sf"/>
</dbReference>
<dbReference type="InterPro" id="IPR036787">
    <property type="entry name" value="T_IF-3_N_sf"/>
</dbReference>
<dbReference type="InterPro" id="IPR019813">
    <property type="entry name" value="Translation_initiation_fac3_CS"/>
</dbReference>
<dbReference type="InterPro" id="IPR001288">
    <property type="entry name" value="Translation_initiation_fac_3"/>
</dbReference>
<dbReference type="InterPro" id="IPR019815">
    <property type="entry name" value="Translation_initiation_fac_3_C"/>
</dbReference>
<dbReference type="InterPro" id="IPR019814">
    <property type="entry name" value="Translation_initiation_fac_3_N"/>
</dbReference>
<dbReference type="NCBIfam" id="TIGR00168">
    <property type="entry name" value="infC"/>
    <property type="match status" value="1"/>
</dbReference>
<dbReference type="PANTHER" id="PTHR10938">
    <property type="entry name" value="TRANSLATION INITIATION FACTOR IF-3"/>
    <property type="match status" value="1"/>
</dbReference>
<dbReference type="PANTHER" id="PTHR10938:SF0">
    <property type="entry name" value="TRANSLATION INITIATION FACTOR IF-3, MITOCHONDRIAL"/>
    <property type="match status" value="1"/>
</dbReference>
<dbReference type="Pfam" id="PF00707">
    <property type="entry name" value="IF3_C"/>
    <property type="match status" value="1"/>
</dbReference>
<dbReference type="Pfam" id="PF05198">
    <property type="entry name" value="IF3_N"/>
    <property type="match status" value="1"/>
</dbReference>
<dbReference type="SUPFAM" id="SSF55200">
    <property type="entry name" value="Translation initiation factor IF3, C-terminal domain"/>
    <property type="match status" value="1"/>
</dbReference>
<dbReference type="SUPFAM" id="SSF54364">
    <property type="entry name" value="Translation initiation factor IF3, N-terminal domain"/>
    <property type="match status" value="1"/>
</dbReference>
<dbReference type="PROSITE" id="PS00938">
    <property type="entry name" value="IF3"/>
    <property type="match status" value="1"/>
</dbReference>
<gene>
    <name evidence="1" type="primary">infC</name>
    <name type="ordered locus">SAV1680</name>
</gene>
<accession>P65139</accession>
<accession>Q8NW70</accession>
<accession>Q99TI1</accession>
<evidence type="ECO:0000255" key="1">
    <source>
        <dbReference type="HAMAP-Rule" id="MF_00080"/>
    </source>
</evidence>
<evidence type="ECO:0000305" key="2"/>
<comment type="function">
    <text evidence="1">IF-3 binds to the 30S ribosomal subunit and shifts the equilibrium between 70S ribosomes and their 50S and 30S subunits in favor of the free subunits, thus enhancing the availability of 30S subunits on which protein synthesis initiation begins.</text>
</comment>
<comment type="subunit">
    <text evidence="1">Monomer.</text>
</comment>
<comment type="subcellular location">
    <subcellularLocation>
        <location evidence="1">Cytoplasm</location>
    </subcellularLocation>
</comment>
<comment type="similarity">
    <text evidence="1">Belongs to the IF-3 family.</text>
</comment>
<comment type="sequence caution" evidence="2">
    <conflict type="erroneous initiation">
        <sequence resource="EMBL-CDS" id="BAB57842"/>
    </conflict>
</comment>